<protein>
    <recommendedName>
        <fullName evidence="1">UPF0194 membrane protein YPTB1212</fullName>
    </recommendedName>
</protein>
<evidence type="ECO:0000255" key="1">
    <source>
        <dbReference type="HAMAP-Rule" id="MF_01304"/>
    </source>
</evidence>
<comment type="subcellular location">
    <subcellularLocation>
        <location evidence="1">Periplasm</location>
    </subcellularLocation>
</comment>
<comment type="similarity">
    <text evidence="1">Belongs to the UPF0194 family.</text>
</comment>
<proteinExistence type="inferred from homology"/>
<organism>
    <name type="scientific">Yersinia pseudotuberculosis serotype I (strain IP32953)</name>
    <dbReference type="NCBI Taxonomy" id="273123"/>
    <lineage>
        <taxon>Bacteria</taxon>
        <taxon>Pseudomonadati</taxon>
        <taxon>Pseudomonadota</taxon>
        <taxon>Gammaproteobacteria</taxon>
        <taxon>Enterobacterales</taxon>
        <taxon>Yersiniaceae</taxon>
        <taxon>Yersinia</taxon>
    </lineage>
</organism>
<accession>Q66D37</accession>
<gene>
    <name type="ordered locus">YPTB1212</name>
</gene>
<dbReference type="EMBL" id="BX936398">
    <property type="protein sequence ID" value="CAH20452.1"/>
    <property type="molecule type" value="Genomic_DNA"/>
</dbReference>
<dbReference type="RefSeq" id="WP_011191973.1">
    <property type="nucleotide sequence ID" value="NC_006155.1"/>
</dbReference>
<dbReference type="SMR" id="Q66D37"/>
<dbReference type="KEGG" id="ypo:BZ17_1315"/>
<dbReference type="KEGG" id="yps:YPTB1212"/>
<dbReference type="PATRIC" id="fig|273123.14.peg.1404"/>
<dbReference type="Proteomes" id="UP000001011">
    <property type="component" value="Chromosome"/>
</dbReference>
<dbReference type="GO" id="GO:0042597">
    <property type="term" value="C:periplasmic space"/>
    <property type="evidence" value="ECO:0007669"/>
    <property type="project" value="UniProtKB-SubCell"/>
</dbReference>
<dbReference type="Gene3D" id="2.40.30.170">
    <property type="match status" value="1"/>
</dbReference>
<dbReference type="Gene3D" id="2.40.50.100">
    <property type="match status" value="1"/>
</dbReference>
<dbReference type="Gene3D" id="1.10.287.470">
    <property type="entry name" value="Helix hairpin bin"/>
    <property type="match status" value="1"/>
</dbReference>
<dbReference type="HAMAP" id="MF_01304">
    <property type="entry name" value="UPF0194"/>
    <property type="match status" value="1"/>
</dbReference>
<dbReference type="InterPro" id="IPR032317">
    <property type="entry name" value="CusB_D23"/>
</dbReference>
<dbReference type="InterPro" id="IPR022936">
    <property type="entry name" value="UPF0194_membrane_YbhG"/>
</dbReference>
<dbReference type="InterPro" id="IPR050465">
    <property type="entry name" value="UPF0194_transport"/>
</dbReference>
<dbReference type="NCBIfam" id="NF002939">
    <property type="entry name" value="PRK03598.1"/>
    <property type="match status" value="1"/>
</dbReference>
<dbReference type="PANTHER" id="PTHR32347">
    <property type="entry name" value="EFFLUX SYSTEM COMPONENT YKNX-RELATED"/>
    <property type="match status" value="1"/>
</dbReference>
<dbReference type="PANTHER" id="PTHR32347:SF29">
    <property type="entry name" value="UPF0194 MEMBRANE PROTEIN YBHG"/>
    <property type="match status" value="1"/>
</dbReference>
<dbReference type="Pfam" id="PF16576">
    <property type="entry name" value="HlyD_D23"/>
    <property type="match status" value="1"/>
</dbReference>
<dbReference type="SUPFAM" id="SSF111369">
    <property type="entry name" value="HlyD-like secretion proteins"/>
    <property type="match status" value="2"/>
</dbReference>
<sequence>MNRKKIIVAAVIVALLATLAYGWHYYRQQNDASLTLYGNVDIRTVNLGFRVAGRLASLAVDEGDDIHPGQTLGKLDDGPYLNALKQAQANVQSAQAQLALLKAGYREEEIAQVRSEVAQRQAAFDYADNFLKRQQGLWASKAVSANELENARTARNQARANLQAAKDKLAQFLSGNRPQEIAQAEANLAQTEAELAQAQLNLQDTILLAPSAGTVLTRAVEPGTILSASNTVFTVSLTDPVWVRAYVSERHLGQAIPGSEVEVFTDGRPDKPYHGKIGFVSPTAEFTPKTVETPDLRTDLVYRLRIIITDADESLRQGMPVTVRFPQR</sequence>
<keyword id="KW-0175">Coiled coil</keyword>
<keyword id="KW-0574">Periplasm</keyword>
<keyword id="KW-0732">Signal</keyword>
<reference key="1">
    <citation type="journal article" date="2004" name="Proc. Natl. Acad. Sci. U.S.A.">
        <title>Insights into the evolution of Yersinia pestis through whole-genome comparison with Yersinia pseudotuberculosis.</title>
        <authorList>
            <person name="Chain P.S.G."/>
            <person name="Carniel E."/>
            <person name="Larimer F.W."/>
            <person name="Lamerdin J."/>
            <person name="Stoutland P.O."/>
            <person name="Regala W.M."/>
            <person name="Georgescu A.M."/>
            <person name="Vergez L.M."/>
            <person name="Land M.L."/>
            <person name="Motin V.L."/>
            <person name="Brubaker R.R."/>
            <person name="Fowler J."/>
            <person name="Hinnebusch J."/>
            <person name="Marceau M."/>
            <person name="Medigue C."/>
            <person name="Simonet M."/>
            <person name="Chenal-Francisque V."/>
            <person name="Souza B."/>
            <person name="Dacheux D."/>
            <person name="Elliott J.M."/>
            <person name="Derbise A."/>
            <person name="Hauser L.J."/>
            <person name="Garcia E."/>
        </authorList>
    </citation>
    <scope>NUCLEOTIDE SEQUENCE [LARGE SCALE GENOMIC DNA]</scope>
    <source>
        <strain>IP32953</strain>
    </source>
</reference>
<feature type="signal peptide" evidence="1">
    <location>
        <begin position="1"/>
        <end position="22"/>
    </location>
</feature>
<feature type="chain" id="PRO_5000098552" description="UPF0194 membrane protein YPTB1212">
    <location>
        <begin position="23"/>
        <end position="328"/>
    </location>
</feature>
<feature type="coiled-coil region" evidence="1">
    <location>
        <begin position="80"/>
        <end position="109"/>
    </location>
</feature>
<feature type="coiled-coil region" evidence="1">
    <location>
        <begin position="142"/>
        <end position="209"/>
    </location>
</feature>
<name>Y1212_YERPS</name>